<protein>
    <recommendedName>
        <fullName evidence="1">Bifunctional purine biosynthesis protein PurH</fullName>
    </recommendedName>
    <domain>
        <recommendedName>
            <fullName evidence="1">Phosphoribosylaminoimidazolecarboxamide formyltransferase</fullName>
            <ecNumber evidence="1">2.1.2.3</ecNumber>
        </recommendedName>
        <alternativeName>
            <fullName evidence="1">AICAR transformylase</fullName>
        </alternativeName>
    </domain>
    <domain>
        <recommendedName>
            <fullName evidence="1">IMP cyclohydrolase</fullName>
            <ecNumber evidence="1">3.5.4.10</ecNumber>
        </recommendedName>
        <alternativeName>
            <fullName evidence="1">ATIC</fullName>
        </alternativeName>
        <alternativeName>
            <fullName evidence="1">IMP synthase</fullName>
        </alternativeName>
        <alternativeName>
            <fullName evidence="1">Inosinicase</fullName>
        </alternativeName>
    </domain>
</protein>
<reference key="1">
    <citation type="journal article" date="2006" name="J. Bacteriol.">
        <title>Genome sequence of Aeromonas hydrophila ATCC 7966T: jack of all trades.</title>
        <authorList>
            <person name="Seshadri R."/>
            <person name="Joseph S.W."/>
            <person name="Chopra A.K."/>
            <person name="Sha J."/>
            <person name="Shaw J."/>
            <person name="Graf J."/>
            <person name="Haft D.H."/>
            <person name="Wu M."/>
            <person name="Ren Q."/>
            <person name="Rosovitz M.J."/>
            <person name="Madupu R."/>
            <person name="Tallon L."/>
            <person name="Kim M."/>
            <person name="Jin S."/>
            <person name="Vuong H."/>
            <person name="Stine O.C."/>
            <person name="Ali A."/>
            <person name="Horneman A.J."/>
            <person name="Heidelberg J.F."/>
        </authorList>
    </citation>
    <scope>NUCLEOTIDE SEQUENCE [LARGE SCALE GENOMIC DNA]</scope>
    <source>
        <strain>ATCC 7966 / DSM 30187 / BCRC 13018 / CCUG 14551 / JCM 1027 / KCTC 2358 / NCIMB 9240 / NCTC 8049</strain>
    </source>
</reference>
<comment type="catalytic activity">
    <reaction evidence="1">
        <text>(6R)-10-formyltetrahydrofolate + 5-amino-1-(5-phospho-beta-D-ribosyl)imidazole-4-carboxamide = 5-formamido-1-(5-phospho-D-ribosyl)imidazole-4-carboxamide + (6S)-5,6,7,8-tetrahydrofolate</text>
        <dbReference type="Rhea" id="RHEA:22192"/>
        <dbReference type="ChEBI" id="CHEBI:57453"/>
        <dbReference type="ChEBI" id="CHEBI:58467"/>
        <dbReference type="ChEBI" id="CHEBI:58475"/>
        <dbReference type="ChEBI" id="CHEBI:195366"/>
        <dbReference type="EC" id="2.1.2.3"/>
    </reaction>
</comment>
<comment type="catalytic activity">
    <reaction evidence="1">
        <text>IMP + H2O = 5-formamido-1-(5-phospho-D-ribosyl)imidazole-4-carboxamide</text>
        <dbReference type="Rhea" id="RHEA:18445"/>
        <dbReference type="ChEBI" id="CHEBI:15377"/>
        <dbReference type="ChEBI" id="CHEBI:58053"/>
        <dbReference type="ChEBI" id="CHEBI:58467"/>
        <dbReference type="EC" id="3.5.4.10"/>
    </reaction>
</comment>
<comment type="pathway">
    <text evidence="1">Purine metabolism; IMP biosynthesis via de novo pathway; 5-formamido-1-(5-phospho-D-ribosyl)imidazole-4-carboxamide from 5-amino-1-(5-phospho-D-ribosyl)imidazole-4-carboxamide (10-formyl THF route): step 1/1.</text>
</comment>
<comment type="pathway">
    <text evidence="1">Purine metabolism; IMP biosynthesis via de novo pathway; IMP from 5-formamido-1-(5-phospho-D-ribosyl)imidazole-4-carboxamide: step 1/1.</text>
</comment>
<comment type="domain">
    <text evidence="1">The IMP cyclohydrolase activity resides in the N-terminal region.</text>
</comment>
<comment type="similarity">
    <text evidence="1">Belongs to the PurH family.</text>
</comment>
<keyword id="KW-0378">Hydrolase</keyword>
<keyword id="KW-0511">Multifunctional enzyme</keyword>
<keyword id="KW-0658">Purine biosynthesis</keyword>
<keyword id="KW-1185">Reference proteome</keyword>
<keyword id="KW-0808">Transferase</keyword>
<gene>
    <name evidence="1" type="primary">purH</name>
    <name type="ordered locus">AHA_0841</name>
</gene>
<evidence type="ECO:0000255" key="1">
    <source>
        <dbReference type="HAMAP-Rule" id="MF_00139"/>
    </source>
</evidence>
<evidence type="ECO:0000255" key="2">
    <source>
        <dbReference type="PROSITE-ProRule" id="PRU01202"/>
    </source>
</evidence>
<dbReference type="EC" id="2.1.2.3" evidence="1"/>
<dbReference type="EC" id="3.5.4.10" evidence="1"/>
<dbReference type="EMBL" id="CP000462">
    <property type="protein sequence ID" value="ABK36339.1"/>
    <property type="molecule type" value="Genomic_DNA"/>
</dbReference>
<dbReference type="RefSeq" id="WP_011704787.1">
    <property type="nucleotide sequence ID" value="NC_008570.1"/>
</dbReference>
<dbReference type="RefSeq" id="YP_855383.1">
    <property type="nucleotide sequence ID" value="NC_008570.1"/>
</dbReference>
<dbReference type="SMR" id="A0KGJ2"/>
<dbReference type="STRING" id="380703.AHA_0841"/>
<dbReference type="EnsemblBacteria" id="ABK36339">
    <property type="protein sequence ID" value="ABK36339"/>
    <property type="gene ID" value="AHA_0841"/>
</dbReference>
<dbReference type="GeneID" id="4487128"/>
<dbReference type="KEGG" id="aha:AHA_0841"/>
<dbReference type="PATRIC" id="fig|380703.7.peg.840"/>
<dbReference type="eggNOG" id="COG0138">
    <property type="taxonomic scope" value="Bacteria"/>
</dbReference>
<dbReference type="HOGENOM" id="CLU_016316_5_2_6"/>
<dbReference type="OrthoDB" id="9802065at2"/>
<dbReference type="UniPathway" id="UPA00074">
    <property type="reaction ID" value="UER00133"/>
</dbReference>
<dbReference type="UniPathway" id="UPA00074">
    <property type="reaction ID" value="UER00135"/>
</dbReference>
<dbReference type="Proteomes" id="UP000000756">
    <property type="component" value="Chromosome"/>
</dbReference>
<dbReference type="GO" id="GO:0005829">
    <property type="term" value="C:cytosol"/>
    <property type="evidence" value="ECO:0007669"/>
    <property type="project" value="TreeGrafter"/>
</dbReference>
<dbReference type="GO" id="GO:0003937">
    <property type="term" value="F:IMP cyclohydrolase activity"/>
    <property type="evidence" value="ECO:0007669"/>
    <property type="project" value="UniProtKB-UniRule"/>
</dbReference>
<dbReference type="GO" id="GO:0004643">
    <property type="term" value="F:phosphoribosylaminoimidazolecarboxamide formyltransferase activity"/>
    <property type="evidence" value="ECO:0007669"/>
    <property type="project" value="UniProtKB-UniRule"/>
</dbReference>
<dbReference type="GO" id="GO:0006189">
    <property type="term" value="P:'de novo' IMP biosynthetic process"/>
    <property type="evidence" value="ECO:0007669"/>
    <property type="project" value="UniProtKB-UniRule"/>
</dbReference>
<dbReference type="CDD" id="cd01421">
    <property type="entry name" value="IMPCH"/>
    <property type="match status" value="1"/>
</dbReference>
<dbReference type="FunFam" id="3.40.140.20:FF:000001">
    <property type="entry name" value="Bifunctional purine biosynthesis protein PurH"/>
    <property type="match status" value="1"/>
</dbReference>
<dbReference type="FunFam" id="3.40.140.20:FF:000002">
    <property type="entry name" value="Bifunctional purine biosynthesis protein PurH"/>
    <property type="match status" value="1"/>
</dbReference>
<dbReference type="FunFam" id="3.40.50.1380:FF:000001">
    <property type="entry name" value="Bifunctional purine biosynthesis protein PurH"/>
    <property type="match status" value="1"/>
</dbReference>
<dbReference type="Gene3D" id="3.40.140.20">
    <property type="match status" value="2"/>
</dbReference>
<dbReference type="Gene3D" id="3.40.50.1380">
    <property type="entry name" value="Methylglyoxal synthase-like domain"/>
    <property type="match status" value="1"/>
</dbReference>
<dbReference type="HAMAP" id="MF_00139">
    <property type="entry name" value="PurH"/>
    <property type="match status" value="1"/>
</dbReference>
<dbReference type="InterPro" id="IPR024051">
    <property type="entry name" value="AICAR_Tfase_dup_dom_sf"/>
</dbReference>
<dbReference type="InterPro" id="IPR016193">
    <property type="entry name" value="Cytidine_deaminase-like"/>
</dbReference>
<dbReference type="InterPro" id="IPR011607">
    <property type="entry name" value="MGS-like_dom"/>
</dbReference>
<dbReference type="InterPro" id="IPR036914">
    <property type="entry name" value="MGS-like_dom_sf"/>
</dbReference>
<dbReference type="InterPro" id="IPR002695">
    <property type="entry name" value="PurH-like"/>
</dbReference>
<dbReference type="NCBIfam" id="NF002049">
    <property type="entry name" value="PRK00881.1"/>
    <property type="match status" value="1"/>
</dbReference>
<dbReference type="NCBIfam" id="TIGR00355">
    <property type="entry name" value="purH"/>
    <property type="match status" value="1"/>
</dbReference>
<dbReference type="PANTHER" id="PTHR11692:SF0">
    <property type="entry name" value="BIFUNCTIONAL PURINE BIOSYNTHESIS PROTEIN ATIC"/>
    <property type="match status" value="1"/>
</dbReference>
<dbReference type="PANTHER" id="PTHR11692">
    <property type="entry name" value="BIFUNCTIONAL PURINE BIOSYNTHESIS PROTEIN PURH"/>
    <property type="match status" value="1"/>
</dbReference>
<dbReference type="Pfam" id="PF01808">
    <property type="entry name" value="AICARFT_IMPCHas"/>
    <property type="match status" value="1"/>
</dbReference>
<dbReference type="Pfam" id="PF02142">
    <property type="entry name" value="MGS"/>
    <property type="match status" value="1"/>
</dbReference>
<dbReference type="PIRSF" id="PIRSF000414">
    <property type="entry name" value="AICARFT_IMPCHas"/>
    <property type="match status" value="1"/>
</dbReference>
<dbReference type="SMART" id="SM00798">
    <property type="entry name" value="AICARFT_IMPCHas"/>
    <property type="match status" value="1"/>
</dbReference>
<dbReference type="SMART" id="SM00851">
    <property type="entry name" value="MGS"/>
    <property type="match status" value="1"/>
</dbReference>
<dbReference type="SUPFAM" id="SSF53927">
    <property type="entry name" value="Cytidine deaminase-like"/>
    <property type="match status" value="1"/>
</dbReference>
<dbReference type="SUPFAM" id="SSF52335">
    <property type="entry name" value="Methylglyoxal synthase-like"/>
    <property type="match status" value="1"/>
</dbReference>
<dbReference type="PROSITE" id="PS51855">
    <property type="entry name" value="MGS"/>
    <property type="match status" value="1"/>
</dbReference>
<proteinExistence type="inferred from homology"/>
<organism>
    <name type="scientific">Aeromonas hydrophila subsp. hydrophila (strain ATCC 7966 / DSM 30187 / BCRC 13018 / CCUG 14551 / JCM 1027 / KCTC 2358 / NCIMB 9240 / NCTC 8049)</name>
    <dbReference type="NCBI Taxonomy" id="380703"/>
    <lineage>
        <taxon>Bacteria</taxon>
        <taxon>Pseudomonadati</taxon>
        <taxon>Pseudomonadota</taxon>
        <taxon>Gammaproteobacteria</taxon>
        <taxon>Aeromonadales</taxon>
        <taxon>Aeromonadaceae</taxon>
        <taxon>Aeromonas</taxon>
    </lineage>
</organism>
<feature type="chain" id="PRO_1000018832" description="Bifunctional purine biosynthesis protein PurH">
    <location>
        <begin position="1"/>
        <end position="530"/>
    </location>
</feature>
<feature type="domain" description="MGS-like" evidence="2">
    <location>
        <begin position="1"/>
        <end position="148"/>
    </location>
</feature>
<accession>A0KGJ2</accession>
<name>PUR9_AERHH</name>
<sequence length="530" mass="56898">MEQARPIRRALLSVSDKTGILEFAKALNERGVALLSTGGTAKLLADAGLPVTEVSDYTGFPEMMDGRVKTLHPKVHGGILGRREQDDAIMAQHAISPIDMVVVNLYPFAATVAKPGCTLADAVENIDIGGPTMVRSAAKNHKDVAIVVKAADYDRVIREMDGNGNSLKLATRFDLAIAAFEHTAAYDGMIANYFGTMVPSYGDNKEGDEESRFPRTFNSQFIKKQDMRYGENSHQAAAFYAEEQAAPGSVASAIQLQGKALSYNNIADTDAALECVKEFDQPACVIVKHANPCGVAIGSDLLSAYERAWQTDPTSAFGGIIAFNRELDGATAKAIVERQFVEVIIAPTVSQAARDAVAAKQNVRLLECGQWTAPAQGFDFKRVNGGLLVQERDLGMVTLGDLTVVSKRQPTEAELNDLLFCWKVAKFVKSNAIVYAKDGQTIGVGAGQMSRVYSAKIAGIKAEDEGLTVAGSVMASDAFFPFRDGIDAAAAAGISCVIQPGGSMRDQEVIDAADEHGMCMLFTNMRHFRH</sequence>